<protein>
    <recommendedName>
        <fullName evidence="1">Probable GTP-binding protein EngB</fullName>
    </recommendedName>
</protein>
<gene>
    <name evidence="1" type="primary">engB</name>
    <name type="ordered locus">mlr4815</name>
</gene>
<evidence type="ECO:0000255" key="1">
    <source>
        <dbReference type="HAMAP-Rule" id="MF_00321"/>
    </source>
</evidence>
<name>ENGB_RHILO</name>
<reference key="1">
    <citation type="journal article" date="2000" name="DNA Res.">
        <title>Complete genome structure of the nitrogen-fixing symbiotic bacterium Mesorhizobium loti.</title>
        <authorList>
            <person name="Kaneko T."/>
            <person name="Nakamura Y."/>
            <person name="Sato S."/>
            <person name="Asamizu E."/>
            <person name="Kato T."/>
            <person name="Sasamoto S."/>
            <person name="Watanabe A."/>
            <person name="Idesawa K."/>
            <person name="Ishikawa A."/>
            <person name="Kawashima K."/>
            <person name="Kimura T."/>
            <person name="Kishida Y."/>
            <person name="Kiyokawa C."/>
            <person name="Kohara M."/>
            <person name="Matsumoto M."/>
            <person name="Matsuno A."/>
            <person name="Mochizuki Y."/>
            <person name="Nakayama S."/>
            <person name="Nakazaki N."/>
            <person name="Shimpo S."/>
            <person name="Sugimoto M."/>
            <person name="Takeuchi C."/>
            <person name="Yamada M."/>
            <person name="Tabata S."/>
        </authorList>
    </citation>
    <scope>NUCLEOTIDE SEQUENCE [LARGE SCALE GENOMIC DNA]</scope>
    <source>
        <strain>LMG 29417 / CECT 9101 / MAFF 303099</strain>
    </source>
</reference>
<organism>
    <name type="scientific">Mesorhizobium japonicum (strain LMG 29417 / CECT 9101 / MAFF 303099)</name>
    <name type="common">Mesorhizobium loti (strain MAFF 303099)</name>
    <dbReference type="NCBI Taxonomy" id="266835"/>
    <lineage>
        <taxon>Bacteria</taxon>
        <taxon>Pseudomonadati</taxon>
        <taxon>Pseudomonadota</taxon>
        <taxon>Alphaproteobacteria</taxon>
        <taxon>Hyphomicrobiales</taxon>
        <taxon>Phyllobacteriaceae</taxon>
        <taxon>Mesorhizobium</taxon>
    </lineage>
</organism>
<sequence>MITTDLFTRGWIFIRGVPAMKFLPPEGPPEIAFAGRSNVGKSSLINALVNQKGLARTSNTPGRTQELNYFVPDGFSGEGADLPPMALVDMPGYGYATAPKEKVDEWTKLVFDYLKGRVTLKRVYVLIDARHGIKAKDDEVLSLLDKAAVSYQIVLTKTDKIKVAGVPRLIEETLQKIKKRPAAFPFVLATSSEKGEGLEELQAAIVLAANGG</sequence>
<feature type="chain" id="PRO_0000157774" description="Probable GTP-binding protein EngB">
    <location>
        <begin position="1"/>
        <end position="212"/>
    </location>
</feature>
<feature type="domain" description="EngB-type G" evidence="1">
    <location>
        <begin position="27"/>
        <end position="211"/>
    </location>
</feature>
<feature type="binding site" evidence="1">
    <location>
        <begin position="35"/>
        <end position="42"/>
    </location>
    <ligand>
        <name>GTP</name>
        <dbReference type="ChEBI" id="CHEBI:37565"/>
    </ligand>
</feature>
<feature type="binding site" evidence="1">
    <location>
        <position position="42"/>
    </location>
    <ligand>
        <name>Mg(2+)</name>
        <dbReference type="ChEBI" id="CHEBI:18420"/>
    </ligand>
</feature>
<feature type="binding site" evidence="1">
    <location>
        <begin position="62"/>
        <end position="66"/>
    </location>
    <ligand>
        <name>GTP</name>
        <dbReference type="ChEBI" id="CHEBI:37565"/>
    </ligand>
</feature>
<feature type="binding site" evidence="1">
    <location>
        <position position="64"/>
    </location>
    <ligand>
        <name>Mg(2+)</name>
        <dbReference type="ChEBI" id="CHEBI:18420"/>
    </ligand>
</feature>
<feature type="binding site" evidence="1">
    <location>
        <begin position="89"/>
        <end position="92"/>
    </location>
    <ligand>
        <name>GTP</name>
        <dbReference type="ChEBI" id="CHEBI:37565"/>
    </ligand>
</feature>
<feature type="binding site" evidence="1">
    <location>
        <begin position="156"/>
        <end position="159"/>
    </location>
    <ligand>
        <name>GTP</name>
        <dbReference type="ChEBI" id="CHEBI:37565"/>
    </ligand>
</feature>
<feature type="binding site" evidence="1">
    <location>
        <begin position="190"/>
        <end position="192"/>
    </location>
    <ligand>
        <name>GTP</name>
        <dbReference type="ChEBI" id="CHEBI:37565"/>
    </ligand>
</feature>
<keyword id="KW-0131">Cell cycle</keyword>
<keyword id="KW-0132">Cell division</keyword>
<keyword id="KW-0342">GTP-binding</keyword>
<keyword id="KW-0460">Magnesium</keyword>
<keyword id="KW-0479">Metal-binding</keyword>
<keyword id="KW-0547">Nucleotide-binding</keyword>
<keyword id="KW-0717">Septation</keyword>
<proteinExistence type="inferred from homology"/>
<dbReference type="EMBL" id="BA000012">
    <property type="protein sequence ID" value="BAB51386.1"/>
    <property type="molecule type" value="Genomic_DNA"/>
</dbReference>
<dbReference type="SMR" id="Q98D85"/>
<dbReference type="KEGG" id="mlo:mlr4815"/>
<dbReference type="eggNOG" id="COG0218">
    <property type="taxonomic scope" value="Bacteria"/>
</dbReference>
<dbReference type="HOGENOM" id="CLU_033732_2_0_5"/>
<dbReference type="Proteomes" id="UP000000552">
    <property type="component" value="Chromosome"/>
</dbReference>
<dbReference type="GO" id="GO:0005829">
    <property type="term" value="C:cytosol"/>
    <property type="evidence" value="ECO:0007669"/>
    <property type="project" value="TreeGrafter"/>
</dbReference>
<dbReference type="GO" id="GO:0005525">
    <property type="term" value="F:GTP binding"/>
    <property type="evidence" value="ECO:0007669"/>
    <property type="project" value="UniProtKB-UniRule"/>
</dbReference>
<dbReference type="GO" id="GO:0046872">
    <property type="term" value="F:metal ion binding"/>
    <property type="evidence" value="ECO:0007669"/>
    <property type="project" value="UniProtKB-KW"/>
</dbReference>
<dbReference type="GO" id="GO:0000917">
    <property type="term" value="P:division septum assembly"/>
    <property type="evidence" value="ECO:0007669"/>
    <property type="project" value="UniProtKB-KW"/>
</dbReference>
<dbReference type="CDD" id="cd01876">
    <property type="entry name" value="YihA_EngB"/>
    <property type="match status" value="1"/>
</dbReference>
<dbReference type="Gene3D" id="3.40.50.300">
    <property type="entry name" value="P-loop containing nucleotide triphosphate hydrolases"/>
    <property type="match status" value="1"/>
</dbReference>
<dbReference type="HAMAP" id="MF_00321">
    <property type="entry name" value="GTPase_EngB"/>
    <property type="match status" value="1"/>
</dbReference>
<dbReference type="InterPro" id="IPR030393">
    <property type="entry name" value="G_ENGB_dom"/>
</dbReference>
<dbReference type="InterPro" id="IPR006073">
    <property type="entry name" value="GTP-bd"/>
</dbReference>
<dbReference type="InterPro" id="IPR019987">
    <property type="entry name" value="GTP-bd_ribosome_bio_YsxC"/>
</dbReference>
<dbReference type="InterPro" id="IPR027417">
    <property type="entry name" value="P-loop_NTPase"/>
</dbReference>
<dbReference type="NCBIfam" id="TIGR03598">
    <property type="entry name" value="GTPase_YsxC"/>
    <property type="match status" value="1"/>
</dbReference>
<dbReference type="PANTHER" id="PTHR11649:SF13">
    <property type="entry name" value="ENGB-TYPE G DOMAIN-CONTAINING PROTEIN"/>
    <property type="match status" value="1"/>
</dbReference>
<dbReference type="PANTHER" id="PTHR11649">
    <property type="entry name" value="MSS1/TRME-RELATED GTP-BINDING PROTEIN"/>
    <property type="match status" value="1"/>
</dbReference>
<dbReference type="Pfam" id="PF01926">
    <property type="entry name" value="MMR_HSR1"/>
    <property type="match status" value="1"/>
</dbReference>
<dbReference type="SUPFAM" id="SSF52540">
    <property type="entry name" value="P-loop containing nucleoside triphosphate hydrolases"/>
    <property type="match status" value="1"/>
</dbReference>
<dbReference type="PROSITE" id="PS51706">
    <property type="entry name" value="G_ENGB"/>
    <property type="match status" value="1"/>
</dbReference>
<comment type="function">
    <text evidence="1">Necessary for normal cell division and for the maintenance of normal septation.</text>
</comment>
<comment type="cofactor">
    <cofactor evidence="1">
        <name>Mg(2+)</name>
        <dbReference type="ChEBI" id="CHEBI:18420"/>
    </cofactor>
</comment>
<comment type="similarity">
    <text evidence="1">Belongs to the TRAFAC class TrmE-Era-EngA-EngB-Septin-like GTPase superfamily. EngB GTPase family.</text>
</comment>
<accession>Q98D85</accession>